<sequence>MNDLLTRRLLTMGAAAAMLAAVLLLTPITVPAGYPGAVAPATAACPDAEVVFARGRFEPPGIGTVGNAFVSALRSKVNKNVGVYAVKYPADNQIDVGANDMSAHIQSMANSCPNTRLVPGGYSLGAAVTDVVLAVPTQMWGFTNPLPPGSDEHIAAVALFGNGSQWVGPITNFSPAYNDRTIELCHGDDPVCHPADPNTWEANWPQHLAGAYVSSGMVNQAADFVAGKLQ</sequence>
<protein>
    <recommendedName>
        <fullName evidence="2">Probable carboxylesterase Culp2</fullName>
        <ecNumber evidence="3">3.1.1.-</ecNumber>
    </recommendedName>
    <alternativeName>
        <fullName evidence="2">Cutinase-like protein 2</fullName>
        <shortName evidence="2">Culp2</shortName>
    </alternativeName>
</protein>
<comment type="subcellular location">
    <subcellularLocation>
        <location evidence="2">Secreted</location>
    </subcellularLocation>
    <subcellularLocation>
        <location evidence="2">Cell surface</location>
    </subcellularLocation>
</comment>
<comment type="PTM">
    <text evidence="4">Predicted to be exported by the Tat system. The position of the signal peptide cleavage has not been experimentally proven.</text>
</comment>
<comment type="similarity">
    <text evidence="5">Belongs to the cutinase family.</text>
</comment>
<comment type="sequence caution" evidence="5">
    <conflict type="erroneous initiation">
        <sequence resource="EMBL-CDS" id="AAK46643"/>
    </conflict>
</comment>
<proteinExistence type="inferred from homology"/>
<evidence type="ECO:0000250" key="1">
    <source>
        <dbReference type="UniProtKB" id="O53581"/>
    </source>
</evidence>
<evidence type="ECO:0000250" key="2">
    <source>
        <dbReference type="UniProtKB" id="P9WP41"/>
    </source>
</evidence>
<evidence type="ECO:0000250" key="3">
    <source>
        <dbReference type="UniProtKB" id="P9WP43"/>
    </source>
</evidence>
<evidence type="ECO:0000255" key="4">
    <source>
        <dbReference type="PROSITE-ProRule" id="PRU00648"/>
    </source>
</evidence>
<evidence type="ECO:0000305" key="5"/>
<feature type="signal peptide" description="Tat-type signal" evidence="4">
    <location>
        <begin position="1"/>
        <end position="32"/>
    </location>
</feature>
<feature type="chain" id="PRO_0000427018" description="Probable carboxylesterase Culp2">
    <location>
        <begin position="33"/>
        <end position="230"/>
    </location>
</feature>
<feature type="active site" description="Nucleophile" evidence="1">
    <location>
        <position position="123"/>
    </location>
</feature>
<feature type="active site" evidence="1">
    <location>
        <position position="189"/>
    </location>
</feature>
<feature type="active site" description="Proton donor/acceptor" evidence="1">
    <location>
        <position position="207"/>
    </location>
</feature>
<feature type="disulfide bond" evidence="1">
    <location>
        <begin position="45"/>
        <end position="112"/>
    </location>
</feature>
<feature type="disulfide bond" evidence="1">
    <location>
        <begin position="185"/>
        <end position="192"/>
    </location>
</feature>
<organism>
    <name type="scientific">Mycobacterium tuberculosis (strain CDC 1551 / Oshkosh)</name>
    <dbReference type="NCBI Taxonomy" id="83331"/>
    <lineage>
        <taxon>Bacteria</taxon>
        <taxon>Bacillati</taxon>
        <taxon>Actinomycetota</taxon>
        <taxon>Actinomycetes</taxon>
        <taxon>Mycobacteriales</taxon>
        <taxon>Mycobacteriaceae</taxon>
        <taxon>Mycobacterium</taxon>
        <taxon>Mycobacterium tuberculosis complex</taxon>
    </lineage>
</organism>
<reference key="1">
    <citation type="journal article" date="2002" name="J. Bacteriol.">
        <title>Whole-genome comparison of Mycobacterium tuberculosis clinical and laboratory strains.</title>
        <authorList>
            <person name="Fleischmann R.D."/>
            <person name="Alland D."/>
            <person name="Eisen J.A."/>
            <person name="Carpenter L."/>
            <person name="White O."/>
            <person name="Peterson J.D."/>
            <person name="DeBoy R.T."/>
            <person name="Dodson R.J."/>
            <person name="Gwinn M.L."/>
            <person name="Haft D.H."/>
            <person name="Hickey E.K."/>
            <person name="Kolonay J.F."/>
            <person name="Nelson W.C."/>
            <person name="Umayam L.A."/>
            <person name="Ermolaeva M.D."/>
            <person name="Salzberg S.L."/>
            <person name="Delcher A."/>
            <person name="Utterback T.R."/>
            <person name="Weidman J.F."/>
            <person name="Khouri H.M."/>
            <person name="Gill J."/>
            <person name="Mikula A."/>
            <person name="Bishai W."/>
            <person name="Jacobs W.R. Jr."/>
            <person name="Venter J.C."/>
            <person name="Fraser C.M."/>
        </authorList>
    </citation>
    <scope>NUCLEOTIDE SEQUENCE [LARGE SCALE GENOMIC DNA]</scope>
    <source>
        <strain>CDC 1551 / Oshkosh</strain>
    </source>
</reference>
<accession>P9WP40</accession>
<accession>L0TAS9</accession>
<accession>P63881</accession>
<accession>Q50664</accession>
<name>CULP2_MYCTO</name>
<keyword id="KW-1015">Disulfide bond</keyword>
<keyword id="KW-0378">Hydrolase</keyword>
<keyword id="KW-1185">Reference proteome</keyword>
<keyword id="KW-0964">Secreted</keyword>
<keyword id="KW-0719">Serine esterase</keyword>
<keyword id="KW-0732">Signal</keyword>
<gene>
    <name type="primary">cut2</name>
    <name type="ordered locus">MT2358</name>
</gene>
<dbReference type="EC" id="3.1.1.-" evidence="3"/>
<dbReference type="EMBL" id="AE000516">
    <property type="protein sequence ID" value="AAK46643.1"/>
    <property type="status" value="ALT_INIT"/>
    <property type="molecule type" value="Genomic_DNA"/>
</dbReference>
<dbReference type="RefSeq" id="WP_003411863.1">
    <property type="nucleotide sequence ID" value="NZ_KK341227.1"/>
</dbReference>
<dbReference type="SMR" id="P9WP40"/>
<dbReference type="ESTHER" id="myctu-cutas2">
    <property type="family name" value="Cutinase"/>
</dbReference>
<dbReference type="KEGG" id="mtc:MT2358"/>
<dbReference type="PATRIC" id="fig|83331.31.peg.2538"/>
<dbReference type="HOGENOM" id="CLU_040058_3_0_11"/>
<dbReference type="Proteomes" id="UP000001020">
    <property type="component" value="Chromosome"/>
</dbReference>
<dbReference type="GO" id="GO:0009986">
    <property type="term" value="C:cell surface"/>
    <property type="evidence" value="ECO:0007669"/>
    <property type="project" value="UniProtKB-SubCell"/>
</dbReference>
<dbReference type="GO" id="GO:0005576">
    <property type="term" value="C:extracellular region"/>
    <property type="evidence" value="ECO:0007669"/>
    <property type="project" value="UniProtKB-SubCell"/>
</dbReference>
<dbReference type="GO" id="GO:0052689">
    <property type="term" value="F:carboxylic ester hydrolase activity"/>
    <property type="evidence" value="ECO:0007669"/>
    <property type="project" value="UniProtKB-KW"/>
</dbReference>
<dbReference type="FunFam" id="3.40.50.1820:FF:000176">
    <property type="entry name" value="Cutinase Cut4"/>
    <property type="match status" value="1"/>
</dbReference>
<dbReference type="Gene3D" id="3.40.50.1820">
    <property type="entry name" value="alpha/beta hydrolase"/>
    <property type="match status" value="1"/>
</dbReference>
<dbReference type="InterPro" id="IPR029058">
    <property type="entry name" value="AB_hydrolase_fold"/>
</dbReference>
<dbReference type="InterPro" id="IPR000675">
    <property type="entry name" value="Cutinase/axe"/>
</dbReference>
<dbReference type="InterPro" id="IPR043580">
    <property type="entry name" value="CUTINASE_1"/>
</dbReference>
<dbReference type="InterPro" id="IPR006311">
    <property type="entry name" value="TAT_signal"/>
</dbReference>
<dbReference type="PANTHER" id="PTHR33630:SF9">
    <property type="entry name" value="CUTINASE 4"/>
    <property type="match status" value="1"/>
</dbReference>
<dbReference type="PANTHER" id="PTHR33630">
    <property type="entry name" value="CUTINASE RV1984C-RELATED-RELATED"/>
    <property type="match status" value="1"/>
</dbReference>
<dbReference type="Pfam" id="PF01083">
    <property type="entry name" value="Cutinase"/>
    <property type="match status" value="1"/>
</dbReference>
<dbReference type="SMART" id="SM01110">
    <property type="entry name" value="Cutinase"/>
    <property type="match status" value="1"/>
</dbReference>
<dbReference type="SUPFAM" id="SSF53474">
    <property type="entry name" value="alpha/beta-Hydrolases"/>
    <property type="match status" value="1"/>
</dbReference>
<dbReference type="PROSITE" id="PS00155">
    <property type="entry name" value="CUTINASE_1"/>
    <property type="match status" value="1"/>
</dbReference>
<dbReference type="PROSITE" id="PS51318">
    <property type="entry name" value="TAT"/>
    <property type="match status" value="1"/>
</dbReference>